<name>CLPX_SERP5</name>
<reference key="1">
    <citation type="submission" date="2007-09" db="EMBL/GenBank/DDBJ databases">
        <title>Complete sequence of chromosome of Serratia proteamaculans 568.</title>
        <authorList>
            <consortium name="US DOE Joint Genome Institute"/>
            <person name="Copeland A."/>
            <person name="Lucas S."/>
            <person name="Lapidus A."/>
            <person name="Barry K."/>
            <person name="Glavina del Rio T."/>
            <person name="Dalin E."/>
            <person name="Tice H."/>
            <person name="Pitluck S."/>
            <person name="Chain P."/>
            <person name="Malfatti S."/>
            <person name="Shin M."/>
            <person name="Vergez L."/>
            <person name="Schmutz J."/>
            <person name="Larimer F."/>
            <person name="Land M."/>
            <person name="Hauser L."/>
            <person name="Kyrpides N."/>
            <person name="Kim E."/>
            <person name="Taghavi S."/>
            <person name="Newman L."/>
            <person name="Vangronsveld J."/>
            <person name="van der Lelie D."/>
            <person name="Richardson P."/>
        </authorList>
    </citation>
    <scope>NUCLEOTIDE SEQUENCE [LARGE SCALE GENOMIC DNA]</scope>
    <source>
        <strain>568</strain>
    </source>
</reference>
<organism>
    <name type="scientific">Serratia proteamaculans (strain 568)</name>
    <dbReference type="NCBI Taxonomy" id="399741"/>
    <lineage>
        <taxon>Bacteria</taxon>
        <taxon>Pseudomonadati</taxon>
        <taxon>Pseudomonadota</taxon>
        <taxon>Gammaproteobacteria</taxon>
        <taxon>Enterobacterales</taxon>
        <taxon>Yersiniaceae</taxon>
        <taxon>Serratia</taxon>
    </lineage>
</organism>
<sequence length="423" mass="46230">MTDKRKDGSGKLLYCSFCGKSQHEVRKLIAGPSVYICDECVDLCNDIIREEIKEVSPHRERSALPTPHEIRHHLDDYVIGQEPAKKVLAVAVYNHYKRLRNGDTSNGIELGKSNILLIGPTGSGKTLLAETLARFLDVPFTMADATTLTEAGYVGEDVENIIQKLLQKCDYDVQKAQRGIVYIDEIDKISRKSDNPSITRDVSGEGVQQALLKLIEGTIAAVPPQGGRKHPQQEFLQVDTSKILFICGGAFAGLDKVIGQRVNTGSGIGFGATVKGESEKATEGELLLQAEPEDLIKFGLIPEFIGRLPVVATLSELSEDALIQILKEPKNALTKQYQALFNLEGVELEFREEALNAIARKAMKRKTGARGLRSIVEGALLDTMYDLPSMDSVDKVVIDESVIAGQSKPLLIYGKPEAQASGE</sequence>
<protein>
    <recommendedName>
        <fullName evidence="1">ATP-dependent Clp protease ATP-binding subunit ClpX</fullName>
    </recommendedName>
</protein>
<evidence type="ECO:0000255" key="1">
    <source>
        <dbReference type="HAMAP-Rule" id="MF_00175"/>
    </source>
</evidence>
<evidence type="ECO:0000255" key="2">
    <source>
        <dbReference type="PROSITE-ProRule" id="PRU01250"/>
    </source>
</evidence>
<gene>
    <name evidence="1" type="primary">clpX</name>
    <name type="ordered locus">Spro_1096</name>
</gene>
<proteinExistence type="inferred from homology"/>
<dbReference type="EMBL" id="CP000826">
    <property type="protein sequence ID" value="ABV40200.1"/>
    <property type="molecule type" value="Genomic_DNA"/>
</dbReference>
<dbReference type="SMR" id="A8GAR0"/>
<dbReference type="STRING" id="399741.Spro_1096"/>
<dbReference type="KEGG" id="spe:Spro_1096"/>
<dbReference type="eggNOG" id="COG1219">
    <property type="taxonomic scope" value="Bacteria"/>
</dbReference>
<dbReference type="HOGENOM" id="CLU_014218_8_2_6"/>
<dbReference type="OrthoDB" id="9804062at2"/>
<dbReference type="GO" id="GO:0009376">
    <property type="term" value="C:HslUV protease complex"/>
    <property type="evidence" value="ECO:0007669"/>
    <property type="project" value="TreeGrafter"/>
</dbReference>
<dbReference type="GO" id="GO:0005524">
    <property type="term" value="F:ATP binding"/>
    <property type="evidence" value="ECO:0007669"/>
    <property type="project" value="UniProtKB-UniRule"/>
</dbReference>
<dbReference type="GO" id="GO:0016887">
    <property type="term" value="F:ATP hydrolysis activity"/>
    <property type="evidence" value="ECO:0007669"/>
    <property type="project" value="InterPro"/>
</dbReference>
<dbReference type="GO" id="GO:0140662">
    <property type="term" value="F:ATP-dependent protein folding chaperone"/>
    <property type="evidence" value="ECO:0007669"/>
    <property type="project" value="InterPro"/>
</dbReference>
<dbReference type="GO" id="GO:0046983">
    <property type="term" value="F:protein dimerization activity"/>
    <property type="evidence" value="ECO:0007669"/>
    <property type="project" value="InterPro"/>
</dbReference>
<dbReference type="GO" id="GO:0051082">
    <property type="term" value="F:unfolded protein binding"/>
    <property type="evidence" value="ECO:0007669"/>
    <property type="project" value="UniProtKB-UniRule"/>
</dbReference>
<dbReference type="GO" id="GO:0008270">
    <property type="term" value="F:zinc ion binding"/>
    <property type="evidence" value="ECO:0007669"/>
    <property type="project" value="InterPro"/>
</dbReference>
<dbReference type="GO" id="GO:0051301">
    <property type="term" value="P:cell division"/>
    <property type="evidence" value="ECO:0007669"/>
    <property type="project" value="TreeGrafter"/>
</dbReference>
<dbReference type="GO" id="GO:0051603">
    <property type="term" value="P:proteolysis involved in protein catabolic process"/>
    <property type="evidence" value="ECO:0007669"/>
    <property type="project" value="TreeGrafter"/>
</dbReference>
<dbReference type="CDD" id="cd19497">
    <property type="entry name" value="RecA-like_ClpX"/>
    <property type="match status" value="1"/>
</dbReference>
<dbReference type="FunFam" id="1.10.8.60:FF:000002">
    <property type="entry name" value="ATP-dependent Clp protease ATP-binding subunit ClpX"/>
    <property type="match status" value="1"/>
</dbReference>
<dbReference type="FunFam" id="3.40.50.300:FF:000005">
    <property type="entry name" value="ATP-dependent Clp protease ATP-binding subunit ClpX"/>
    <property type="match status" value="1"/>
</dbReference>
<dbReference type="Gene3D" id="1.10.8.60">
    <property type="match status" value="1"/>
</dbReference>
<dbReference type="Gene3D" id="6.20.220.10">
    <property type="entry name" value="ClpX chaperone, C4-type zinc finger domain"/>
    <property type="match status" value="1"/>
</dbReference>
<dbReference type="Gene3D" id="3.40.50.300">
    <property type="entry name" value="P-loop containing nucleotide triphosphate hydrolases"/>
    <property type="match status" value="1"/>
</dbReference>
<dbReference type="HAMAP" id="MF_00175">
    <property type="entry name" value="ClpX"/>
    <property type="match status" value="1"/>
</dbReference>
<dbReference type="InterPro" id="IPR003593">
    <property type="entry name" value="AAA+_ATPase"/>
</dbReference>
<dbReference type="InterPro" id="IPR050052">
    <property type="entry name" value="ATP-dep_Clp_protease_ClpX"/>
</dbReference>
<dbReference type="InterPro" id="IPR003959">
    <property type="entry name" value="ATPase_AAA_core"/>
</dbReference>
<dbReference type="InterPro" id="IPR019489">
    <property type="entry name" value="Clp_ATPase_C"/>
</dbReference>
<dbReference type="InterPro" id="IPR004487">
    <property type="entry name" value="Clp_protease_ATP-bd_su_ClpX"/>
</dbReference>
<dbReference type="InterPro" id="IPR046425">
    <property type="entry name" value="ClpX_bact"/>
</dbReference>
<dbReference type="InterPro" id="IPR027417">
    <property type="entry name" value="P-loop_NTPase"/>
</dbReference>
<dbReference type="InterPro" id="IPR010603">
    <property type="entry name" value="Znf_CppX_C4"/>
</dbReference>
<dbReference type="InterPro" id="IPR038366">
    <property type="entry name" value="Znf_CppX_C4_sf"/>
</dbReference>
<dbReference type="NCBIfam" id="TIGR00382">
    <property type="entry name" value="clpX"/>
    <property type="match status" value="1"/>
</dbReference>
<dbReference type="NCBIfam" id="NF003745">
    <property type="entry name" value="PRK05342.1"/>
    <property type="match status" value="1"/>
</dbReference>
<dbReference type="PANTHER" id="PTHR48102:SF7">
    <property type="entry name" value="ATP-DEPENDENT CLP PROTEASE ATP-BINDING SUBUNIT CLPX-LIKE, MITOCHONDRIAL"/>
    <property type="match status" value="1"/>
</dbReference>
<dbReference type="PANTHER" id="PTHR48102">
    <property type="entry name" value="ATP-DEPENDENT CLP PROTEASE ATP-BINDING SUBUNIT CLPX-LIKE, MITOCHONDRIAL-RELATED"/>
    <property type="match status" value="1"/>
</dbReference>
<dbReference type="Pfam" id="PF07724">
    <property type="entry name" value="AAA_2"/>
    <property type="match status" value="1"/>
</dbReference>
<dbReference type="Pfam" id="PF10431">
    <property type="entry name" value="ClpB_D2-small"/>
    <property type="match status" value="1"/>
</dbReference>
<dbReference type="Pfam" id="PF06689">
    <property type="entry name" value="zf-C4_ClpX"/>
    <property type="match status" value="1"/>
</dbReference>
<dbReference type="SMART" id="SM00382">
    <property type="entry name" value="AAA"/>
    <property type="match status" value="1"/>
</dbReference>
<dbReference type="SMART" id="SM01086">
    <property type="entry name" value="ClpB_D2-small"/>
    <property type="match status" value="1"/>
</dbReference>
<dbReference type="SMART" id="SM00994">
    <property type="entry name" value="zf-C4_ClpX"/>
    <property type="match status" value="1"/>
</dbReference>
<dbReference type="SUPFAM" id="SSF57716">
    <property type="entry name" value="Glucocorticoid receptor-like (DNA-binding domain)"/>
    <property type="match status" value="1"/>
</dbReference>
<dbReference type="SUPFAM" id="SSF52540">
    <property type="entry name" value="P-loop containing nucleoside triphosphate hydrolases"/>
    <property type="match status" value="1"/>
</dbReference>
<dbReference type="PROSITE" id="PS51902">
    <property type="entry name" value="CLPX_ZB"/>
    <property type="match status" value="1"/>
</dbReference>
<feature type="chain" id="PRO_1000058345" description="ATP-dependent Clp protease ATP-binding subunit ClpX">
    <location>
        <begin position="1"/>
        <end position="423"/>
    </location>
</feature>
<feature type="domain" description="ClpX-type ZB" evidence="2">
    <location>
        <begin position="2"/>
        <end position="56"/>
    </location>
</feature>
<feature type="binding site" evidence="2">
    <location>
        <position position="15"/>
    </location>
    <ligand>
        <name>Zn(2+)</name>
        <dbReference type="ChEBI" id="CHEBI:29105"/>
    </ligand>
</feature>
<feature type="binding site" evidence="2">
    <location>
        <position position="18"/>
    </location>
    <ligand>
        <name>Zn(2+)</name>
        <dbReference type="ChEBI" id="CHEBI:29105"/>
    </ligand>
</feature>
<feature type="binding site" evidence="2">
    <location>
        <position position="37"/>
    </location>
    <ligand>
        <name>Zn(2+)</name>
        <dbReference type="ChEBI" id="CHEBI:29105"/>
    </ligand>
</feature>
<feature type="binding site" evidence="2">
    <location>
        <position position="40"/>
    </location>
    <ligand>
        <name>Zn(2+)</name>
        <dbReference type="ChEBI" id="CHEBI:29105"/>
    </ligand>
</feature>
<feature type="binding site" evidence="1">
    <location>
        <begin position="120"/>
        <end position="127"/>
    </location>
    <ligand>
        <name>ATP</name>
        <dbReference type="ChEBI" id="CHEBI:30616"/>
    </ligand>
</feature>
<keyword id="KW-0067">ATP-binding</keyword>
<keyword id="KW-0143">Chaperone</keyword>
<keyword id="KW-0479">Metal-binding</keyword>
<keyword id="KW-0547">Nucleotide-binding</keyword>
<keyword id="KW-0862">Zinc</keyword>
<accession>A8GAR0</accession>
<comment type="function">
    <text evidence="1">ATP-dependent specificity component of the Clp protease. It directs the protease to specific substrates. Can perform chaperone functions in the absence of ClpP.</text>
</comment>
<comment type="subunit">
    <text evidence="1">Component of the ClpX-ClpP complex. Forms a hexameric ring that, in the presence of ATP, binds to fourteen ClpP subunits assembled into a disk-like structure with a central cavity, resembling the structure of eukaryotic proteasomes.</text>
</comment>
<comment type="similarity">
    <text evidence="1">Belongs to the ClpX chaperone family.</text>
</comment>